<evidence type="ECO:0000255" key="1">
    <source>
        <dbReference type="HAMAP-Rule" id="MF_01108"/>
    </source>
</evidence>
<comment type="function">
    <text evidence="1">Catalyzes the hydrolysis of the amide bond of N(2)-acetylated L-amino acids. Cleaves the acetyl group from N-acetyl-L-ornithine to form L-ornithine, an intermediate in L-arginine biosynthesis pathway, and a branchpoint in the synthesis of polyamines.</text>
</comment>
<comment type="catalytic activity">
    <reaction evidence="1">
        <text>N(2)-acetyl-L-ornithine + H2O = L-ornithine + acetate</text>
        <dbReference type="Rhea" id="RHEA:15941"/>
        <dbReference type="ChEBI" id="CHEBI:15377"/>
        <dbReference type="ChEBI" id="CHEBI:30089"/>
        <dbReference type="ChEBI" id="CHEBI:46911"/>
        <dbReference type="ChEBI" id="CHEBI:57805"/>
        <dbReference type="EC" id="3.5.1.16"/>
    </reaction>
</comment>
<comment type="cofactor">
    <cofactor evidence="1">
        <name>Zn(2+)</name>
        <dbReference type="ChEBI" id="CHEBI:29105"/>
    </cofactor>
    <cofactor evidence="1">
        <name>Co(2+)</name>
        <dbReference type="ChEBI" id="CHEBI:48828"/>
    </cofactor>
    <text evidence="1">Binds 2 Zn(2+) or Co(2+) ions per subunit.</text>
</comment>
<comment type="cofactor">
    <cofactor evidence="1">
        <name>glutathione</name>
        <dbReference type="ChEBI" id="CHEBI:57925"/>
    </cofactor>
</comment>
<comment type="pathway">
    <text evidence="1">Amino-acid biosynthesis; L-arginine biosynthesis; L-ornithine from N(2)-acetyl-L-ornithine (linear): step 1/1.</text>
</comment>
<comment type="subunit">
    <text evidence="1">Homodimer.</text>
</comment>
<comment type="subcellular location">
    <subcellularLocation>
        <location evidence="1">Cytoplasm</location>
    </subcellularLocation>
</comment>
<comment type="similarity">
    <text evidence="1">Belongs to the peptidase M20A family. ArgE subfamily.</text>
</comment>
<organism>
    <name type="scientific">Salmonella arizonae (strain ATCC BAA-731 / CDC346-86 / RSK2980)</name>
    <dbReference type="NCBI Taxonomy" id="41514"/>
    <lineage>
        <taxon>Bacteria</taxon>
        <taxon>Pseudomonadati</taxon>
        <taxon>Pseudomonadota</taxon>
        <taxon>Gammaproteobacteria</taxon>
        <taxon>Enterobacterales</taxon>
        <taxon>Enterobacteriaceae</taxon>
        <taxon>Salmonella</taxon>
    </lineage>
</organism>
<sequence length="383" mass="42056">MKNVLPPFIEIYRALIATPSISATEASLDQSNASLITLLAGWFSDLGFNVEVQPVPGTRNKFNMLASSGHGAGGLLLAGHTDTVPFDDGRWTRDPFTLTEHDNKLYGLGTADMKGFFAFILDALRAVDVTQLKKPLYILATADEETSMAGARYFSETTALRPDCAIIGEPTSLQPIRAHKGHISNVVRVLGQSGHSSDPARGVNAIELMHDAIGHIMQLRDSLKARYHYEAFTVPYPTLNLGHIHGGDASNRICACCELHMDIRPLPGMTLNDLNGLLNDALAPVSERWPGRLTVAELHPPIPGYECPPDHQLVEVVEKLLGTKTDVVNYCTEAPFMQTLCPTLVLGPGSINQAHQPDEYLETRFIKPTRELITQVVHHFCWH</sequence>
<name>ARGE_SALAR</name>
<feature type="chain" id="PRO_1000084830" description="Acetylornithine deacetylase">
    <location>
        <begin position="1"/>
        <end position="383"/>
    </location>
</feature>
<feature type="active site" evidence="1">
    <location>
        <position position="82"/>
    </location>
</feature>
<feature type="active site" evidence="1">
    <location>
        <position position="144"/>
    </location>
</feature>
<feature type="binding site" evidence="1">
    <location>
        <position position="80"/>
    </location>
    <ligand>
        <name>Zn(2+)</name>
        <dbReference type="ChEBI" id="CHEBI:29105"/>
        <label>1</label>
    </ligand>
</feature>
<feature type="binding site" evidence="1">
    <location>
        <position position="112"/>
    </location>
    <ligand>
        <name>Zn(2+)</name>
        <dbReference type="ChEBI" id="CHEBI:29105"/>
        <label>1</label>
    </ligand>
</feature>
<feature type="binding site" evidence="1">
    <location>
        <position position="112"/>
    </location>
    <ligand>
        <name>Zn(2+)</name>
        <dbReference type="ChEBI" id="CHEBI:29105"/>
        <label>2</label>
    </ligand>
</feature>
<feature type="binding site" evidence="1">
    <location>
        <position position="145"/>
    </location>
    <ligand>
        <name>Zn(2+)</name>
        <dbReference type="ChEBI" id="CHEBI:29105"/>
        <label>2</label>
    </ligand>
</feature>
<feature type="binding site" evidence="1">
    <location>
        <position position="169"/>
    </location>
    <ligand>
        <name>Zn(2+)</name>
        <dbReference type="ChEBI" id="CHEBI:29105"/>
        <label>1</label>
    </ligand>
</feature>
<feature type="binding site" evidence="1">
    <location>
        <position position="355"/>
    </location>
    <ligand>
        <name>Zn(2+)</name>
        <dbReference type="ChEBI" id="CHEBI:29105"/>
        <label>2</label>
    </ligand>
</feature>
<dbReference type="EC" id="3.5.1.16" evidence="1"/>
<dbReference type="EMBL" id="CP000880">
    <property type="protein sequence ID" value="ABX23359.1"/>
    <property type="molecule type" value="Genomic_DNA"/>
</dbReference>
<dbReference type="SMR" id="A9MI13"/>
<dbReference type="STRING" id="41514.SARI_03544"/>
<dbReference type="MEROPS" id="M20.974"/>
<dbReference type="KEGG" id="ses:SARI_03544"/>
<dbReference type="HOGENOM" id="CLU_021802_2_4_6"/>
<dbReference type="UniPathway" id="UPA00068">
    <property type="reaction ID" value="UER00110"/>
</dbReference>
<dbReference type="Proteomes" id="UP000002084">
    <property type="component" value="Chromosome"/>
</dbReference>
<dbReference type="GO" id="GO:0005737">
    <property type="term" value="C:cytoplasm"/>
    <property type="evidence" value="ECO:0007669"/>
    <property type="project" value="UniProtKB-SubCell"/>
</dbReference>
<dbReference type="GO" id="GO:0008777">
    <property type="term" value="F:acetylornithine deacetylase activity"/>
    <property type="evidence" value="ECO:0007669"/>
    <property type="project" value="UniProtKB-UniRule"/>
</dbReference>
<dbReference type="GO" id="GO:0008270">
    <property type="term" value="F:zinc ion binding"/>
    <property type="evidence" value="ECO:0007669"/>
    <property type="project" value="UniProtKB-UniRule"/>
</dbReference>
<dbReference type="GO" id="GO:0006526">
    <property type="term" value="P:L-arginine biosynthetic process"/>
    <property type="evidence" value="ECO:0007669"/>
    <property type="project" value="UniProtKB-UniRule"/>
</dbReference>
<dbReference type="CDD" id="cd03894">
    <property type="entry name" value="M20_ArgE"/>
    <property type="match status" value="1"/>
</dbReference>
<dbReference type="FunFam" id="3.30.70.360:FF:000003">
    <property type="entry name" value="Acetylornithine deacetylase"/>
    <property type="match status" value="1"/>
</dbReference>
<dbReference type="Gene3D" id="3.30.70.360">
    <property type="match status" value="1"/>
</dbReference>
<dbReference type="Gene3D" id="3.40.630.10">
    <property type="entry name" value="Zn peptidases"/>
    <property type="match status" value="1"/>
</dbReference>
<dbReference type="HAMAP" id="MF_01108">
    <property type="entry name" value="ArgE"/>
    <property type="match status" value="1"/>
</dbReference>
<dbReference type="InterPro" id="IPR010169">
    <property type="entry name" value="AcOrn-deacetyl"/>
</dbReference>
<dbReference type="InterPro" id="IPR001261">
    <property type="entry name" value="ArgE/DapE_CS"/>
</dbReference>
<dbReference type="InterPro" id="IPR036264">
    <property type="entry name" value="Bact_exopeptidase_dim_dom"/>
</dbReference>
<dbReference type="InterPro" id="IPR002933">
    <property type="entry name" value="Peptidase_M20"/>
</dbReference>
<dbReference type="InterPro" id="IPR011650">
    <property type="entry name" value="Peptidase_M20_dimer"/>
</dbReference>
<dbReference type="InterPro" id="IPR050072">
    <property type="entry name" value="Peptidase_M20A"/>
</dbReference>
<dbReference type="NCBIfam" id="TIGR01892">
    <property type="entry name" value="AcOrn-deacetyl"/>
    <property type="match status" value="1"/>
</dbReference>
<dbReference type="NCBIfam" id="NF003474">
    <property type="entry name" value="PRK05111.1"/>
    <property type="match status" value="1"/>
</dbReference>
<dbReference type="PANTHER" id="PTHR43808">
    <property type="entry name" value="ACETYLORNITHINE DEACETYLASE"/>
    <property type="match status" value="1"/>
</dbReference>
<dbReference type="PANTHER" id="PTHR43808:SF1">
    <property type="entry name" value="ACETYLORNITHINE DEACETYLASE"/>
    <property type="match status" value="1"/>
</dbReference>
<dbReference type="Pfam" id="PF07687">
    <property type="entry name" value="M20_dimer"/>
    <property type="match status" value="1"/>
</dbReference>
<dbReference type="Pfam" id="PF01546">
    <property type="entry name" value="Peptidase_M20"/>
    <property type="match status" value="1"/>
</dbReference>
<dbReference type="SUPFAM" id="SSF55031">
    <property type="entry name" value="Bacterial exopeptidase dimerisation domain"/>
    <property type="match status" value="1"/>
</dbReference>
<dbReference type="SUPFAM" id="SSF53187">
    <property type="entry name" value="Zn-dependent exopeptidases"/>
    <property type="match status" value="1"/>
</dbReference>
<dbReference type="PROSITE" id="PS00758">
    <property type="entry name" value="ARGE_DAPE_CPG2_1"/>
    <property type="match status" value="1"/>
</dbReference>
<dbReference type="PROSITE" id="PS00759">
    <property type="entry name" value="ARGE_DAPE_CPG2_2"/>
    <property type="match status" value="1"/>
</dbReference>
<proteinExistence type="inferred from homology"/>
<keyword id="KW-0028">Amino-acid biosynthesis</keyword>
<keyword id="KW-0055">Arginine biosynthesis</keyword>
<keyword id="KW-0170">Cobalt</keyword>
<keyword id="KW-0963">Cytoplasm</keyword>
<keyword id="KW-0378">Hydrolase</keyword>
<keyword id="KW-0479">Metal-binding</keyword>
<keyword id="KW-1185">Reference proteome</keyword>
<keyword id="KW-0862">Zinc</keyword>
<gene>
    <name evidence="1" type="primary">argE</name>
    <name type="ordered locus">SARI_03544</name>
</gene>
<protein>
    <recommendedName>
        <fullName evidence="1">Acetylornithine deacetylase</fullName>
        <shortName evidence="1">AO</shortName>
        <shortName evidence="1">Acetylornithinase</shortName>
        <ecNumber evidence="1">3.5.1.16</ecNumber>
    </recommendedName>
    <alternativeName>
        <fullName evidence="1">N-acetylornithinase</fullName>
        <shortName evidence="1">NAO</shortName>
    </alternativeName>
</protein>
<accession>A9MI13</accession>
<reference key="1">
    <citation type="submission" date="2007-11" db="EMBL/GenBank/DDBJ databases">
        <authorList>
            <consortium name="The Salmonella enterica serovar Arizonae Genome Sequencing Project"/>
            <person name="McClelland M."/>
            <person name="Sanderson E.K."/>
            <person name="Porwollik S."/>
            <person name="Spieth J."/>
            <person name="Clifton W.S."/>
            <person name="Fulton R."/>
            <person name="Chunyan W."/>
            <person name="Wollam A."/>
            <person name="Shah N."/>
            <person name="Pepin K."/>
            <person name="Bhonagiri V."/>
            <person name="Nash W."/>
            <person name="Johnson M."/>
            <person name="Thiruvilangam P."/>
            <person name="Wilson R."/>
        </authorList>
    </citation>
    <scope>NUCLEOTIDE SEQUENCE [LARGE SCALE GENOMIC DNA]</scope>
    <source>
        <strain>ATCC BAA-731 / CDC346-86 / RSK2980</strain>
    </source>
</reference>